<reference key="1">
    <citation type="journal article" date="1977" name="J. Biochem.">
        <title>Horsetail (Equisetum arvense) ferredoxins I and II Amino acid sequences and gene duplication.</title>
        <authorList>
            <person name="Hase T."/>
            <person name="Wada K."/>
            <person name="Matsubara H."/>
        </authorList>
    </citation>
    <scope>PROTEIN SEQUENCE</scope>
</reference>
<reference key="2">
    <citation type="journal article" date="1975" name="Biochem. J.">
        <title>Equisetum (horsetail) ferredoxin: characterization of the active centre and position of the four cysteine residues in this 2Fe-2S protein.</title>
        <authorList>
            <person name="Kagamiyama H."/>
            <person name="Rao K.K."/>
            <person name="Hall D.O."/>
            <person name="Cammack R."/>
            <person name="Matsubara H."/>
        </authorList>
    </citation>
    <scope>IRON-SULFUR CLUSTER-BINDING SITES CYS-38; CYS-43; CYS-46 AND CYS-76</scope>
</reference>
<reference key="3">
    <citation type="journal article" date="1994" name="Acta Crystallogr. D">
        <title>Structure of [2Fe-2S] ferredoxin I from Equisetum arvense at 1.8-A resolution.</title>
        <authorList>
            <person name="Ikemizu S."/>
            <person name="Bando M."/>
            <person name="Sato T."/>
            <person name="Morimoto Y."/>
            <person name="Tsukihara T."/>
            <person name="Fukuyama K."/>
        </authorList>
    </citation>
    <scope>X-RAY CRYSTALLOGRAPHY (1.8 ANGSTROMS)</scope>
</reference>
<dbReference type="PIR" id="A04609">
    <property type="entry name" value="FEEQ1F"/>
</dbReference>
<dbReference type="PDB" id="1FRR">
    <property type="method" value="X-ray"/>
    <property type="resolution" value="1.80 A"/>
    <property type="chains" value="A/B=1-95"/>
</dbReference>
<dbReference type="PDBsum" id="1FRR"/>
<dbReference type="SMR" id="P00235"/>
<dbReference type="EvolutionaryTrace" id="P00235"/>
<dbReference type="GO" id="GO:0009507">
    <property type="term" value="C:chloroplast"/>
    <property type="evidence" value="ECO:0007669"/>
    <property type="project" value="UniProtKB-SubCell"/>
</dbReference>
<dbReference type="GO" id="GO:0051537">
    <property type="term" value="F:2 iron, 2 sulfur cluster binding"/>
    <property type="evidence" value="ECO:0007669"/>
    <property type="project" value="UniProtKB-KW"/>
</dbReference>
<dbReference type="GO" id="GO:0009055">
    <property type="term" value="F:electron transfer activity"/>
    <property type="evidence" value="ECO:0007669"/>
    <property type="project" value="InterPro"/>
</dbReference>
<dbReference type="GO" id="GO:0046872">
    <property type="term" value="F:metal ion binding"/>
    <property type="evidence" value="ECO:0007669"/>
    <property type="project" value="UniProtKB-KW"/>
</dbReference>
<dbReference type="GO" id="GO:0022900">
    <property type="term" value="P:electron transport chain"/>
    <property type="evidence" value="ECO:0007669"/>
    <property type="project" value="InterPro"/>
</dbReference>
<dbReference type="CDD" id="cd00207">
    <property type="entry name" value="fer2"/>
    <property type="match status" value="1"/>
</dbReference>
<dbReference type="FunFam" id="3.10.20.30:FF:000014">
    <property type="entry name" value="Ferredoxin"/>
    <property type="match status" value="1"/>
</dbReference>
<dbReference type="Gene3D" id="3.10.20.30">
    <property type="match status" value="1"/>
</dbReference>
<dbReference type="InterPro" id="IPR036010">
    <property type="entry name" value="2Fe-2S_ferredoxin-like_sf"/>
</dbReference>
<dbReference type="InterPro" id="IPR001041">
    <property type="entry name" value="2Fe-2S_ferredoxin-type"/>
</dbReference>
<dbReference type="InterPro" id="IPR006058">
    <property type="entry name" value="2Fe2S_fd_BS"/>
</dbReference>
<dbReference type="InterPro" id="IPR012675">
    <property type="entry name" value="Beta-grasp_dom_sf"/>
</dbReference>
<dbReference type="InterPro" id="IPR010241">
    <property type="entry name" value="Fd_pln"/>
</dbReference>
<dbReference type="NCBIfam" id="TIGR02008">
    <property type="entry name" value="fdx_plant"/>
    <property type="match status" value="1"/>
</dbReference>
<dbReference type="PANTHER" id="PTHR43112">
    <property type="entry name" value="FERREDOXIN"/>
    <property type="match status" value="1"/>
</dbReference>
<dbReference type="PANTHER" id="PTHR43112:SF3">
    <property type="entry name" value="FERREDOXIN-2, CHLOROPLASTIC"/>
    <property type="match status" value="1"/>
</dbReference>
<dbReference type="Pfam" id="PF00111">
    <property type="entry name" value="Fer2"/>
    <property type="match status" value="1"/>
</dbReference>
<dbReference type="SUPFAM" id="SSF54292">
    <property type="entry name" value="2Fe-2S ferredoxin-like"/>
    <property type="match status" value="1"/>
</dbReference>
<dbReference type="PROSITE" id="PS00197">
    <property type="entry name" value="2FE2S_FER_1"/>
    <property type="match status" value="1"/>
</dbReference>
<dbReference type="PROSITE" id="PS51085">
    <property type="entry name" value="2FE2S_FER_2"/>
    <property type="match status" value="1"/>
</dbReference>
<protein>
    <recommendedName>
        <fullName>Ferredoxin-1</fullName>
    </recommendedName>
    <alternativeName>
        <fullName>Ferredoxin I</fullName>
    </alternativeName>
</protein>
<accession>P00235</accession>
<sequence>AYKTVLKTPSGEFTLDVPEGTTILDAAEEAGYDLPFSCRAGACSSCLGKVVSGSVDESEGSFLDDGQMEEGFVLTCIAIPESDLVIETHKEEELF</sequence>
<organism>
    <name type="scientific">Equisetum arvense</name>
    <name type="common">Field horsetail</name>
    <name type="synonym">Common horsetail</name>
    <dbReference type="NCBI Taxonomy" id="3258"/>
    <lineage>
        <taxon>Eukaryota</taxon>
        <taxon>Viridiplantae</taxon>
        <taxon>Streptophyta</taxon>
        <taxon>Embryophyta</taxon>
        <taxon>Tracheophyta</taxon>
        <taxon>Polypodiopsida</taxon>
        <taxon>Equisetidae</taxon>
        <taxon>Equisetales</taxon>
        <taxon>Equisetaceae</taxon>
        <taxon>Equisetum</taxon>
    </lineage>
</organism>
<evidence type="ECO:0000255" key="1">
    <source>
        <dbReference type="PROSITE-ProRule" id="PRU00465"/>
    </source>
</evidence>
<evidence type="ECO:0000305" key="2"/>
<evidence type="ECO:0007829" key="3">
    <source>
        <dbReference type="PDB" id="1FRR"/>
    </source>
</evidence>
<proteinExistence type="evidence at protein level"/>
<name>FER1_EQUAR</name>
<feature type="chain" id="PRO_0000189328" description="Ferredoxin-1">
    <location>
        <begin position="1"/>
        <end position="95"/>
    </location>
</feature>
<feature type="domain" description="2Fe-2S ferredoxin-type" evidence="1">
    <location>
        <begin position="2"/>
        <end position="92"/>
    </location>
</feature>
<feature type="binding site">
    <location>
        <position position="38"/>
    </location>
    <ligand>
        <name>[2Fe-2S] cluster</name>
        <dbReference type="ChEBI" id="CHEBI:190135"/>
    </ligand>
</feature>
<feature type="binding site">
    <location>
        <position position="43"/>
    </location>
    <ligand>
        <name>[2Fe-2S] cluster</name>
        <dbReference type="ChEBI" id="CHEBI:190135"/>
    </ligand>
</feature>
<feature type="binding site">
    <location>
        <position position="46"/>
    </location>
    <ligand>
        <name>[2Fe-2S] cluster</name>
        <dbReference type="ChEBI" id="CHEBI:190135"/>
    </ligand>
</feature>
<feature type="binding site">
    <location>
        <position position="76"/>
    </location>
    <ligand>
        <name>[2Fe-2S] cluster</name>
        <dbReference type="ChEBI" id="CHEBI:190135"/>
    </ligand>
</feature>
<feature type="strand" evidence="3">
    <location>
        <begin position="2"/>
        <end position="8"/>
    </location>
</feature>
<feature type="strand" evidence="3">
    <location>
        <begin position="11"/>
        <end position="17"/>
    </location>
</feature>
<feature type="helix" evidence="3">
    <location>
        <begin position="23"/>
        <end position="29"/>
    </location>
</feature>
<feature type="strand" evidence="3">
    <location>
        <begin position="37"/>
        <end position="44"/>
    </location>
</feature>
<feature type="strand" evidence="3">
    <location>
        <begin position="47"/>
        <end position="53"/>
    </location>
</feature>
<feature type="helix" evidence="3">
    <location>
        <begin position="65"/>
        <end position="69"/>
    </location>
</feature>
<feature type="strand" evidence="3">
    <location>
        <begin position="72"/>
        <end position="74"/>
    </location>
</feature>
<feature type="turn" evidence="3">
    <location>
        <begin position="75"/>
        <end position="77"/>
    </location>
</feature>
<feature type="strand" evidence="3">
    <location>
        <begin position="79"/>
        <end position="82"/>
    </location>
</feature>
<feature type="strand" evidence="3">
    <location>
        <begin position="84"/>
        <end position="87"/>
    </location>
</feature>
<feature type="turn" evidence="3">
    <location>
        <begin position="91"/>
        <end position="94"/>
    </location>
</feature>
<comment type="function">
    <text>Ferredoxins are iron-sulfur proteins that transfer electrons in a wide variety of metabolic reactions.</text>
</comment>
<comment type="cofactor">
    <cofactor>
        <name>[2Fe-2S] cluster</name>
        <dbReference type="ChEBI" id="CHEBI:190135"/>
    </cofactor>
    <text>Binds 1 [2Fe-2S] cluster.</text>
</comment>
<comment type="subcellular location">
    <subcellularLocation>
        <location>Plastid</location>
        <location>Chloroplast</location>
    </subcellularLocation>
</comment>
<comment type="similarity">
    <text evidence="2">Belongs to the 2Fe2S plant-type ferredoxin family.</text>
</comment>
<keyword id="KW-0001">2Fe-2S</keyword>
<keyword id="KW-0002">3D-structure</keyword>
<keyword id="KW-0150">Chloroplast</keyword>
<keyword id="KW-0903">Direct protein sequencing</keyword>
<keyword id="KW-0249">Electron transport</keyword>
<keyword id="KW-0408">Iron</keyword>
<keyword id="KW-0411">Iron-sulfur</keyword>
<keyword id="KW-0479">Metal-binding</keyword>
<keyword id="KW-0934">Plastid</keyword>
<keyword id="KW-0813">Transport</keyword>